<reference key="1">
    <citation type="submission" date="1996-04" db="EMBL/GenBank/DDBJ databases">
        <title>The molecular analysis of an NAH7-type gene cluster, pah, located on the chromosome of Pseudomonas aeruginosa PaK1.</title>
        <authorList>
            <person name="Takizawa N."/>
            <person name="Iida T."/>
            <person name="Yamauchi K."/>
            <person name="Satoh S."/>
            <person name="Wang Y."/>
            <person name="Fukuda M."/>
            <person name="Kiyohara H."/>
        </authorList>
    </citation>
    <scope>NUCLEOTIDE SEQUENCE [GENOMIC DNA]</scope>
    <source>
        <strain>PaK1</strain>
    </source>
</reference>
<feature type="chain" id="PRO_0000096704" description="Trans-O-hydroxybenzylidenepyruvate hydratase-aldolase">
    <location>
        <begin position="1"/>
        <end position="334"/>
    </location>
</feature>
<evidence type="ECO:0000250" key="1"/>
<evidence type="ECO:0000305" key="2"/>
<sequence length="334" mass="36942">MSNKIMKTSRLTAEDINGAWTIMPTPSTPDASDWRSTATVDLEETARIVEELIAAGVNGILSMGTFGECATLTWDEKRDYVSTIVETIRGRVPYFCGTTALNTREVIRQTRELIDIGANGTMLGVPMWVKMDLPTAVQFYRDVADAVPEAAIAIYANPEAFKFDFPRPFWAEMSKIPQVVTAKYLGIGMLDLDLRLAPNIRFLPHEDDYYAAARINPERITAFWSSGAMCGPATAIMLRDEVVRAKSTGDWAKAKAISDDMRAADSTLFPRGDFSEFSKYNIGLEKARMDAAGWLKAGPCRPPYNLVPEDYLAGAQKSGKAWAALHAKYSNELK</sequence>
<accession>P0A142</accession>
<accession>Q57444</accession>
<gene>
    <name type="primary">pahE</name>
</gene>
<organism>
    <name type="scientific">Pseudomonas aeruginosa</name>
    <dbReference type="NCBI Taxonomy" id="287"/>
    <lineage>
        <taxon>Bacteria</taxon>
        <taxon>Pseudomonadati</taxon>
        <taxon>Pseudomonadota</taxon>
        <taxon>Gammaproteobacteria</taxon>
        <taxon>Pseudomonadales</taxon>
        <taxon>Pseudomonadaceae</taxon>
        <taxon>Pseudomonas</taxon>
    </lineage>
</organism>
<name>NAHE_PSEAI</name>
<protein>
    <recommendedName>
        <fullName>Trans-O-hydroxybenzylidenepyruvate hydratase-aldolase</fullName>
        <shortName>THBPA hydratase-aldolase</shortName>
        <ecNumber>4.1.2.45</ecNumber>
    </recommendedName>
    <alternativeName>
        <fullName>2'-hydroxybenzalpyruvate aldolase</fullName>
    </alternativeName>
</protein>
<proteinExistence type="inferred from homology"/>
<dbReference type="EC" id="4.1.2.45"/>
<dbReference type="EMBL" id="D84146">
    <property type="protein sequence ID" value="BAA12246.1"/>
    <property type="molecule type" value="Genomic_DNA"/>
</dbReference>
<dbReference type="SMR" id="P0A142"/>
<dbReference type="UniPathway" id="UPA00082"/>
<dbReference type="GO" id="GO:0008840">
    <property type="term" value="F:4-hydroxy-tetrahydrodipicolinate synthase activity"/>
    <property type="evidence" value="ECO:0007669"/>
    <property type="project" value="TreeGrafter"/>
</dbReference>
<dbReference type="GO" id="GO:0018813">
    <property type="term" value="F:trans-o-hydroxybenzylidenepyruvate hydratase-aldolase activity"/>
    <property type="evidence" value="ECO:0007669"/>
    <property type="project" value="UniProtKB-EC"/>
</dbReference>
<dbReference type="GO" id="GO:0009056">
    <property type="term" value="P:catabolic process"/>
    <property type="evidence" value="ECO:0007669"/>
    <property type="project" value="UniProtKB-KW"/>
</dbReference>
<dbReference type="CDD" id="cd00952">
    <property type="entry name" value="CHBPH_aldolase"/>
    <property type="match status" value="1"/>
</dbReference>
<dbReference type="FunFam" id="3.20.20.70:FF:000190">
    <property type="entry name" value="Trans-o-hydroxybenzylidenepyruvate hydratase-aldolase"/>
    <property type="match status" value="1"/>
</dbReference>
<dbReference type="Gene3D" id="3.20.20.70">
    <property type="entry name" value="Aldolase class I"/>
    <property type="match status" value="1"/>
</dbReference>
<dbReference type="InterPro" id="IPR013785">
    <property type="entry name" value="Aldolase_TIM"/>
</dbReference>
<dbReference type="InterPro" id="IPR002220">
    <property type="entry name" value="DapA-like"/>
</dbReference>
<dbReference type="InterPro" id="IPR048038">
    <property type="entry name" value="HBPHA/CBPHA"/>
</dbReference>
<dbReference type="PANTHER" id="PTHR12128:SF66">
    <property type="entry name" value="4-HYDROXY-2-OXOGLUTARATE ALDOLASE, MITOCHONDRIAL"/>
    <property type="match status" value="1"/>
</dbReference>
<dbReference type="PANTHER" id="PTHR12128">
    <property type="entry name" value="DIHYDRODIPICOLINATE SYNTHASE"/>
    <property type="match status" value="1"/>
</dbReference>
<dbReference type="Pfam" id="PF00701">
    <property type="entry name" value="DHDPS"/>
    <property type="match status" value="1"/>
</dbReference>
<dbReference type="PIRSF" id="PIRSF001365">
    <property type="entry name" value="DHDPS"/>
    <property type="match status" value="1"/>
</dbReference>
<dbReference type="PRINTS" id="PR00146">
    <property type="entry name" value="DHPICSNTHASE"/>
</dbReference>
<dbReference type="SMART" id="SM01130">
    <property type="entry name" value="DHDPS"/>
    <property type="match status" value="1"/>
</dbReference>
<dbReference type="SUPFAM" id="SSF51569">
    <property type="entry name" value="Aldolase"/>
    <property type="match status" value="1"/>
</dbReference>
<keyword id="KW-0058">Aromatic hydrocarbons catabolism</keyword>
<keyword id="KW-0456">Lyase</keyword>
<keyword id="KW-0670">Pyruvate</keyword>
<comment type="function">
    <text evidence="1">Involved in the naphthalene upper catabolic pathway. Catalyzes the transformation of trans-O-hydroxybenzylidenepyruvate (THBPA) to salicylaldehyde and pyruvate. The reaction is reversible (By similarity).</text>
</comment>
<comment type="catalytic activity">
    <reaction>
        <text>(3E)-4-(2-hydroxyphenyl)-2-oxobut-3-enoate + H2O = salicylaldehyde + pyruvate</text>
        <dbReference type="Rhea" id="RHEA:27389"/>
        <dbReference type="ChEBI" id="CHEBI:15361"/>
        <dbReference type="ChEBI" id="CHEBI:15377"/>
        <dbReference type="ChEBI" id="CHEBI:16008"/>
        <dbReference type="ChEBI" id="CHEBI:59353"/>
        <dbReference type="EC" id="4.1.2.45"/>
    </reaction>
</comment>
<comment type="pathway">
    <text>Aromatic compound metabolism; naphthalene degradation.</text>
</comment>
<comment type="similarity">
    <text evidence="2">Belongs to the DapA family.</text>
</comment>